<protein>
    <recommendedName>
        <fullName evidence="1">Peptidyl-tRNA hydrolase</fullName>
        <shortName evidence="1">Pth</shortName>
        <ecNumber evidence="1">3.1.1.29</ecNumber>
    </recommendedName>
</protein>
<keyword id="KW-0963">Cytoplasm</keyword>
<keyword id="KW-0378">Hydrolase</keyword>
<keyword id="KW-1185">Reference proteome</keyword>
<keyword id="KW-0694">RNA-binding</keyword>
<keyword id="KW-0820">tRNA-binding</keyword>
<organism>
    <name type="scientific">Finegoldia magna (strain ATCC 29328 / DSM 20472 / WAL 2508)</name>
    <name type="common">Peptostreptococcus magnus</name>
    <dbReference type="NCBI Taxonomy" id="334413"/>
    <lineage>
        <taxon>Bacteria</taxon>
        <taxon>Bacillati</taxon>
        <taxon>Bacillota</taxon>
        <taxon>Tissierellia</taxon>
        <taxon>Tissierellales</taxon>
        <taxon>Peptoniphilaceae</taxon>
        <taxon>Finegoldia</taxon>
    </lineage>
</organism>
<gene>
    <name evidence="1" type="primary">pth</name>
    <name type="ordered locus">FMG_0480</name>
</gene>
<feature type="chain" id="PRO_1000092942" description="Peptidyl-tRNA hydrolase">
    <location>
        <begin position="1"/>
        <end position="189"/>
    </location>
</feature>
<feature type="active site" description="Proton acceptor" evidence="1">
    <location>
        <position position="19"/>
    </location>
</feature>
<feature type="binding site" evidence="1">
    <location>
        <position position="14"/>
    </location>
    <ligand>
        <name>tRNA</name>
        <dbReference type="ChEBI" id="CHEBI:17843"/>
    </ligand>
</feature>
<feature type="binding site" evidence="1">
    <location>
        <position position="64"/>
    </location>
    <ligand>
        <name>tRNA</name>
        <dbReference type="ChEBI" id="CHEBI:17843"/>
    </ligand>
</feature>
<feature type="binding site" evidence="1">
    <location>
        <position position="66"/>
    </location>
    <ligand>
        <name>tRNA</name>
        <dbReference type="ChEBI" id="CHEBI:17843"/>
    </ligand>
</feature>
<feature type="binding site" evidence="1">
    <location>
        <position position="112"/>
    </location>
    <ligand>
        <name>tRNA</name>
        <dbReference type="ChEBI" id="CHEBI:17843"/>
    </ligand>
</feature>
<feature type="site" description="Discriminates between blocked and unblocked aminoacyl-tRNA" evidence="1">
    <location>
        <position position="9"/>
    </location>
</feature>
<feature type="site" description="Stabilizes the basic form of H active site to accept a proton" evidence="1">
    <location>
        <position position="91"/>
    </location>
</feature>
<evidence type="ECO:0000255" key="1">
    <source>
        <dbReference type="HAMAP-Rule" id="MF_00083"/>
    </source>
</evidence>
<name>PTH_FINM2</name>
<proteinExistence type="inferred from homology"/>
<sequence>MYLIAGLGNPGSKYEYTRHNAGFMVIDDLAKKLNIKVNKLKFKSLIGEGFIGDEKVILMKPSTYMNDSGKAILDCFNYYNLSAENLIVICDDIDIPFGTIRIKKKGSAGTHNGLKSIIYLIESQDFARIKVSVGQNDKYDLKDFVLSQFSKKEFEVLEKEIDMSSDAAIKIVEENVDYAMNNFNGKSVI</sequence>
<comment type="function">
    <text evidence="1">Hydrolyzes ribosome-free peptidyl-tRNAs (with 1 or more amino acids incorporated), which drop off the ribosome during protein synthesis, or as a result of ribosome stalling.</text>
</comment>
<comment type="function">
    <text evidence="1">Catalyzes the release of premature peptidyl moieties from peptidyl-tRNA molecules trapped in stalled 50S ribosomal subunits, and thus maintains levels of free tRNAs and 50S ribosomes.</text>
</comment>
<comment type="catalytic activity">
    <reaction evidence="1">
        <text>an N-acyl-L-alpha-aminoacyl-tRNA + H2O = an N-acyl-L-amino acid + a tRNA + H(+)</text>
        <dbReference type="Rhea" id="RHEA:54448"/>
        <dbReference type="Rhea" id="RHEA-COMP:10123"/>
        <dbReference type="Rhea" id="RHEA-COMP:13883"/>
        <dbReference type="ChEBI" id="CHEBI:15377"/>
        <dbReference type="ChEBI" id="CHEBI:15378"/>
        <dbReference type="ChEBI" id="CHEBI:59874"/>
        <dbReference type="ChEBI" id="CHEBI:78442"/>
        <dbReference type="ChEBI" id="CHEBI:138191"/>
        <dbReference type="EC" id="3.1.1.29"/>
    </reaction>
</comment>
<comment type="subunit">
    <text evidence="1">Monomer.</text>
</comment>
<comment type="subcellular location">
    <subcellularLocation>
        <location evidence="1">Cytoplasm</location>
    </subcellularLocation>
</comment>
<comment type="similarity">
    <text evidence="1">Belongs to the PTH family.</text>
</comment>
<accession>B0S0D9</accession>
<reference key="1">
    <citation type="journal article" date="2008" name="DNA Res.">
        <title>Complete genome sequence of Finegoldia magna, an anaerobic opportunistic pathogen.</title>
        <authorList>
            <person name="Goto T."/>
            <person name="Yamashita A."/>
            <person name="Hirakawa H."/>
            <person name="Matsutani M."/>
            <person name="Todo K."/>
            <person name="Ohshima K."/>
            <person name="Toh H."/>
            <person name="Miyamoto K."/>
            <person name="Kuhara S."/>
            <person name="Hattori M."/>
            <person name="Shimizu T."/>
            <person name="Akimoto S."/>
        </authorList>
    </citation>
    <scope>NUCLEOTIDE SEQUENCE [LARGE SCALE GENOMIC DNA]</scope>
    <source>
        <strain>ATCC 29328 / DSM 20472 / WAL 2508</strain>
    </source>
</reference>
<dbReference type="EC" id="3.1.1.29" evidence="1"/>
<dbReference type="EMBL" id="AP008971">
    <property type="protein sequence ID" value="BAG07898.1"/>
    <property type="molecule type" value="Genomic_DNA"/>
</dbReference>
<dbReference type="RefSeq" id="WP_012290432.1">
    <property type="nucleotide sequence ID" value="NC_010376.1"/>
</dbReference>
<dbReference type="SMR" id="B0S0D9"/>
<dbReference type="STRING" id="334413.FMG_0480"/>
<dbReference type="KEGG" id="fma:FMG_0480"/>
<dbReference type="eggNOG" id="COG0193">
    <property type="taxonomic scope" value="Bacteria"/>
</dbReference>
<dbReference type="HOGENOM" id="CLU_062456_4_1_9"/>
<dbReference type="Proteomes" id="UP000001319">
    <property type="component" value="Chromosome"/>
</dbReference>
<dbReference type="GO" id="GO:0005737">
    <property type="term" value="C:cytoplasm"/>
    <property type="evidence" value="ECO:0007669"/>
    <property type="project" value="UniProtKB-SubCell"/>
</dbReference>
<dbReference type="GO" id="GO:0004045">
    <property type="term" value="F:peptidyl-tRNA hydrolase activity"/>
    <property type="evidence" value="ECO:0007669"/>
    <property type="project" value="UniProtKB-UniRule"/>
</dbReference>
<dbReference type="GO" id="GO:0000049">
    <property type="term" value="F:tRNA binding"/>
    <property type="evidence" value="ECO:0007669"/>
    <property type="project" value="UniProtKB-UniRule"/>
</dbReference>
<dbReference type="GO" id="GO:0006515">
    <property type="term" value="P:protein quality control for misfolded or incompletely synthesized proteins"/>
    <property type="evidence" value="ECO:0007669"/>
    <property type="project" value="UniProtKB-UniRule"/>
</dbReference>
<dbReference type="GO" id="GO:0072344">
    <property type="term" value="P:rescue of stalled ribosome"/>
    <property type="evidence" value="ECO:0007669"/>
    <property type="project" value="UniProtKB-UniRule"/>
</dbReference>
<dbReference type="CDD" id="cd00462">
    <property type="entry name" value="PTH"/>
    <property type="match status" value="1"/>
</dbReference>
<dbReference type="FunFam" id="3.40.50.1470:FF:000001">
    <property type="entry name" value="Peptidyl-tRNA hydrolase"/>
    <property type="match status" value="1"/>
</dbReference>
<dbReference type="Gene3D" id="3.40.50.1470">
    <property type="entry name" value="Peptidyl-tRNA hydrolase"/>
    <property type="match status" value="1"/>
</dbReference>
<dbReference type="HAMAP" id="MF_00083">
    <property type="entry name" value="Pept_tRNA_hydro_bact"/>
    <property type="match status" value="1"/>
</dbReference>
<dbReference type="InterPro" id="IPR001328">
    <property type="entry name" value="Pept_tRNA_hydro"/>
</dbReference>
<dbReference type="InterPro" id="IPR018171">
    <property type="entry name" value="Pept_tRNA_hydro_CS"/>
</dbReference>
<dbReference type="InterPro" id="IPR036416">
    <property type="entry name" value="Pept_tRNA_hydro_sf"/>
</dbReference>
<dbReference type="NCBIfam" id="TIGR00447">
    <property type="entry name" value="pth"/>
    <property type="match status" value="1"/>
</dbReference>
<dbReference type="PANTHER" id="PTHR17224">
    <property type="entry name" value="PEPTIDYL-TRNA HYDROLASE"/>
    <property type="match status" value="1"/>
</dbReference>
<dbReference type="PANTHER" id="PTHR17224:SF1">
    <property type="entry name" value="PEPTIDYL-TRNA HYDROLASE"/>
    <property type="match status" value="1"/>
</dbReference>
<dbReference type="Pfam" id="PF01195">
    <property type="entry name" value="Pept_tRNA_hydro"/>
    <property type="match status" value="1"/>
</dbReference>
<dbReference type="SUPFAM" id="SSF53178">
    <property type="entry name" value="Peptidyl-tRNA hydrolase-like"/>
    <property type="match status" value="1"/>
</dbReference>
<dbReference type="PROSITE" id="PS01195">
    <property type="entry name" value="PEPT_TRNA_HYDROL_1"/>
    <property type="match status" value="1"/>
</dbReference>
<dbReference type="PROSITE" id="PS01196">
    <property type="entry name" value="PEPT_TRNA_HYDROL_2"/>
    <property type="match status" value="1"/>
</dbReference>